<feature type="chain" id="PRO_0000040626" description="Non-structural protein P8">
    <location>
        <begin position="1"/>
        <end position="229"/>
    </location>
</feature>
<feature type="chain" id="PRO_0000040627" description="Non-structural protein NS3A">
    <location>
        <begin position="14"/>
        <end position="229"/>
    </location>
</feature>
<feature type="transmembrane region" description="Helical" evidence="2">
    <location>
        <begin position="119"/>
        <end position="139"/>
    </location>
</feature>
<feature type="transmembrane region" description="Helical" evidence="2">
    <location>
        <begin position="162"/>
        <end position="182"/>
    </location>
</feature>
<keyword id="KW-1032">Host cell membrane</keyword>
<keyword id="KW-1040">Host Golgi apparatus</keyword>
<keyword id="KW-1043">Host membrane</keyword>
<keyword id="KW-0945">Host-virus interaction</keyword>
<keyword id="KW-1090">Inhibition of host innate immune response by virus</keyword>
<keyword id="KW-0472">Membrane</keyword>
<keyword id="KW-0812">Transmembrane</keyword>
<keyword id="KW-1133">Transmembrane helix</keyword>
<keyword id="KW-0899">Viral immunoevasion</keyword>
<organismHost>
    <name type="scientific">Antilocapra americana</name>
    <name type="common">Pronghorn</name>
    <dbReference type="NCBI Taxonomy" id="9891"/>
</organismHost>
<organismHost>
    <name type="scientific">Bos taurus</name>
    <name type="common">Bovine</name>
    <dbReference type="NCBI Taxonomy" id="9913"/>
</organismHost>
<organismHost>
    <name type="scientific">Capra hircus</name>
    <name type="common">Goat</name>
    <dbReference type="NCBI Taxonomy" id="9925"/>
</organismHost>
<organismHost>
    <name type="scientific">Culicoides variipennis</name>
    <name type="common">Biting midge</name>
    <dbReference type="NCBI Taxonomy" id="46212"/>
</organismHost>
<organismHost>
    <name type="scientific">Ovis aries</name>
    <name type="common">Sheep</name>
    <dbReference type="NCBI Taxonomy" id="9940"/>
</organismHost>
<comment type="function">
    <text evidence="1">Plays a role in the inhibition of host innate immune response. Interacts with host OPTN and thus inhibits the recruitment of TBK1 to the host Golgi apparatus. In turn, downstream partner IRF3 cannot be activated and IFN-beta production is impaired.</text>
</comment>
<comment type="function">
    <text evidence="1">Facilitates viral particle release either by increasing plasma membrane permeability through a viroporin-like activity or by viral budding.</text>
</comment>
<comment type="subunit">
    <text evidence="1">Forms homooligomers via coiled-coil motif. Interacts with host OPTN; this interaction inhibits innate immune response.</text>
</comment>
<comment type="subcellular location">
    <subcellularLocation>
        <location evidence="1">Host cell membrane</location>
        <topology evidence="2">Multi-pass membrane protein</topology>
    </subcellularLocation>
    <subcellularLocation>
        <location evidence="1">Host Golgi apparatus</location>
    </subcellularLocation>
</comment>
<comment type="similarity">
    <text evidence="3">Belongs to the orbivirus NS3 family.</text>
</comment>
<organism>
    <name type="scientific">Bluetongue virus 2 (isolate USA)</name>
    <name type="common">BTV 2</name>
    <dbReference type="NCBI Taxonomy" id="10907"/>
    <lineage>
        <taxon>Viruses</taxon>
        <taxon>Riboviria</taxon>
        <taxon>Orthornavirae</taxon>
        <taxon>Duplornaviricota</taxon>
        <taxon>Resentoviricetes</taxon>
        <taxon>Reovirales</taxon>
        <taxon>Sedoreoviridae</taxon>
        <taxon>Orbivirus</taxon>
        <taxon>Bluetongue virus</taxon>
    </lineage>
</organism>
<reference key="1">
    <citation type="journal article" date="1992" name="Virus Res.">
        <title>Sequence conservation among the cognate nonstructural NS3/3A protein genes of six bluetongue viruses.</title>
        <authorList>
            <person name="Hwang G.-Y."/>
            <person name="Yang Y.-Y."/>
            <person name="Chiou J.-F."/>
            <person name="Li J.K.-K."/>
        </authorList>
    </citation>
    <scope>NUCLEOTIDE SEQUENCE [GENOMIC RNA]</scope>
</reference>
<dbReference type="EMBL" id="L08628">
    <property type="protein sequence ID" value="AAA42834.1"/>
    <property type="molecule type" value="Genomic_RNA"/>
</dbReference>
<dbReference type="SMR" id="Q04687"/>
<dbReference type="GO" id="GO:0044177">
    <property type="term" value="C:host cell Golgi apparatus"/>
    <property type="evidence" value="ECO:0007669"/>
    <property type="project" value="UniProtKB-SubCell"/>
</dbReference>
<dbReference type="GO" id="GO:0020002">
    <property type="term" value="C:host cell plasma membrane"/>
    <property type="evidence" value="ECO:0007669"/>
    <property type="project" value="UniProtKB-SubCell"/>
</dbReference>
<dbReference type="GO" id="GO:0016020">
    <property type="term" value="C:membrane"/>
    <property type="evidence" value="ECO:0007669"/>
    <property type="project" value="UniProtKB-KW"/>
</dbReference>
<dbReference type="GO" id="GO:0052170">
    <property type="term" value="P:symbiont-mediated suppression of host innate immune response"/>
    <property type="evidence" value="ECO:0007669"/>
    <property type="project" value="UniProtKB-KW"/>
</dbReference>
<dbReference type="InterPro" id="IPR002565">
    <property type="entry name" value="Orbi_NS3"/>
</dbReference>
<dbReference type="Pfam" id="PF01616">
    <property type="entry name" value="Orbi_NS3"/>
    <property type="match status" value="1"/>
</dbReference>
<gene>
    <name type="primary">Segment-10</name>
</gene>
<sequence length="229" mass="25482">MLSGLIQRFEEEKMKHNQERVEELSLVRVDDAISQPPRYAPSAPMPSSMPTVALEILDKAMSNTTGATQTQKAEKAAFASYAEAFRDDVRLRQIKRHVNEQILPKLKSDLGGLKKKRAIIHMTLLIAAVVALLTSVCTLSSDMSVAFKLNGTSAEIPQWFKSLNPMLGVVNVGATFLMMVCAKSERSLNQQIDMIKKEVMKKQSYNDAVRMSFTEFSSVPLDGFELPLT</sequence>
<evidence type="ECO:0000250" key="1">
    <source>
        <dbReference type="UniProtKB" id="P08363"/>
    </source>
</evidence>
<evidence type="ECO:0000255" key="2"/>
<evidence type="ECO:0000305" key="3"/>
<name>VP8_BTV2A</name>
<protein>
    <recommendedName>
        <fullName>Non-structural protein P8</fullName>
    </recommendedName>
    <alternativeName>
        <fullName>Non-structural protein NS3</fullName>
    </alternativeName>
    <component>
        <recommendedName>
            <fullName>Non-structural protein NS3A</fullName>
        </recommendedName>
    </component>
</protein>
<accession>Q04687</accession>
<proteinExistence type="inferred from homology"/>